<gene>
    <name evidence="1" type="primary">hemE</name>
    <name type="ordered locus">PMN2A_0019</name>
</gene>
<dbReference type="EC" id="4.1.1.37" evidence="1"/>
<dbReference type="EMBL" id="CP000095">
    <property type="protein sequence ID" value="AAZ57511.1"/>
    <property type="molecule type" value="Genomic_DNA"/>
</dbReference>
<dbReference type="RefSeq" id="WP_011293553.1">
    <property type="nucleotide sequence ID" value="NC_007335.2"/>
</dbReference>
<dbReference type="SMR" id="Q46LW7"/>
<dbReference type="STRING" id="59920.PMN2A_0019"/>
<dbReference type="KEGG" id="pmn:PMN2A_0019"/>
<dbReference type="HOGENOM" id="CLU_040933_0_2_3"/>
<dbReference type="OrthoDB" id="9806656at2"/>
<dbReference type="PhylomeDB" id="Q46LW7"/>
<dbReference type="UniPathway" id="UPA00251">
    <property type="reaction ID" value="UER00321"/>
</dbReference>
<dbReference type="Proteomes" id="UP000002535">
    <property type="component" value="Chromosome"/>
</dbReference>
<dbReference type="GO" id="GO:0005737">
    <property type="term" value="C:cytoplasm"/>
    <property type="evidence" value="ECO:0007669"/>
    <property type="project" value="UniProtKB-SubCell"/>
</dbReference>
<dbReference type="GO" id="GO:0004853">
    <property type="term" value="F:uroporphyrinogen decarboxylase activity"/>
    <property type="evidence" value="ECO:0007669"/>
    <property type="project" value="UniProtKB-UniRule"/>
</dbReference>
<dbReference type="GO" id="GO:0006782">
    <property type="term" value="P:protoporphyrinogen IX biosynthetic process"/>
    <property type="evidence" value="ECO:0007669"/>
    <property type="project" value="UniProtKB-UniRule"/>
</dbReference>
<dbReference type="CDD" id="cd00717">
    <property type="entry name" value="URO-D"/>
    <property type="match status" value="1"/>
</dbReference>
<dbReference type="FunFam" id="3.20.20.210:FF:000006">
    <property type="entry name" value="Uroporphyrinogen decarboxylase"/>
    <property type="match status" value="1"/>
</dbReference>
<dbReference type="Gene3D" id="3.20.20.210">
    <property type="match status" value="1"/>
</dbReference>
<dbReference type="HAMAP" id="MF_00218">
    <property type="entry name" value="URO_D"/>
    <property type="match status" value="1"/>
</dbReference>
<dbReference type="InterPro" id="IPR038071">
    <property type="entry name" value="UROD/MetE-like_sf"/>
</dbReference>
<dbReference type="InterPro" id="IPR006361">
    <property type="entry name" value="Uroporphyrinogen_deCO2ase_HemE"/>
</dbReference>
<dbReference type="InterPro" id="IPR000257">
    <property type="entry name" value="Uroporphyrinogen_deCOase"/>
</dbReference>
<dbReference type="NCBIfam" id="TIGR01464">
    <property type="entry name" value="hemE"/>
    <property type="match status" value="1"/>
</dbReference>
<dbReference type="PANTHER" id="PTHR21091">
    <property type="entry name" value="METHYLTETRAHYDROFOLATE:HOMOCYSTEINE METHYLTRANSFERASE RELATED"/>
    <property type="match status" value="1"/>
</dbReference>
<dbReference type="PANTHER" id="PTHR21091:SF169">
    <property type="entry name" value="UROPORPHYRINOGEN DECARBOXYLASE"/>
    <property type="match status" value="1"/>
</dbReference>
<dbReference type="Pfam" id="PF01208">
    <property type="entry name" value="URO-D"/>
    <property type="match status" value="1"/>
</dbReference>
<dbReference type="SUPFAM" id="SSF51726">
    <property type="entry name" value="UROD/MetE-like"/>
    <property type="match status" value="1"/>
</dbReference>
<dbReference type="PROSITE" id="PS00906">
    <property type="entry name" value="UROD_1"/>
    <property type="match status" value="1"/>
</dbReference>
<dbReference type="PROSITE" id="PS00907">
    <property type="entry name" value="UROD_2"/>
    <property type="match status" value="1"/>
</dbReference>
<proteinExistence type="inferred from homology"/>
<accession>Q46LW7</accession>
<sequence>MNETTPLLLRAARGENVERPPVWMMRQAGRYMKVYRDLRDNHPSFRERSENPDLSYEISMQPFKAFQPDGVILFSDILTPLPGMGINFDIVESKGPLINDPIRSLKQVKDLKPLQPEESMSFVGEVLGRLRESVGNKAAVLGFVGAPWTLAAYVVEGKSSKNYAVIKAMAFQEPELLHQLLNHFAESIANYLSYQIQSGAQVVQMFDSWAGQLSPQDYDEFAAPYQQKVVNLVKEKHPDTPMILYISGSAGVIERMGQTGVDIVSLDWTVDMADGLKRLPQAVGVQGNVDPGLLFGTPDAIRSRIVDVVRKAKGRKHILNLGHGILPGTPEENARVFFEAGKNVNELIKVSS</sequence>
<organism>
    <name type="scientific">Prochlorococcus marinus (strain NATL2A)</name>
    <dbReference type="NCBI Taxonomy" id="59920"/>
    <lineage>
        <taxon>Bacteria</taxon>
        <taxon>Bacillati</taxon>
        <taxon>Cyanobacteriota</taxon>
        <taxon>Cyanophyceae</taxon>
        <taxon>Synechococcales</taxon>
        <taxon>Prochlorococcaceae</taxon>
        <taxon>Prochlorococcus</taxon>
    </lineage>
</organism>
<reference key="1">
    <citation type="journal article" date="2007" name="PLoS Genet.">
        <title>Patterns and implications of gene gain and loss in the evolution of Prochlorococcus.</title>
        <authorList>
            <person name="Kettler G.C."/>
            <person name="Martiny A.C."/>
            <person name="Huang K."/>
            <person name="Zucker J."/>
            <person name="Coleman M.L."/>
            <person name="Rodrigue S."/>
            <person name="Chen F."/>
            <person name="Lapidus A."/>
            <person name="Ferriera S."/>
            <person name="Johnson J."/>
            <person name="Steglich C."/>
            <person name="Church G.M."/>
            <person name="Richardson P."/>
            <person name="Chisholm S.W."/>
        </authorList>
    </citation>
    <scope>NUCLEOTIDE SEQUENCE [LARGE SCALE GENOMIC DNA]</scope>
    <source>
        <strain>NATL2A</strain>
    </source>
</reference>
<evidence type="ECO:0000255" key="1">
    <source>
        <dbReference type="HAMAP-Rule" id="MF_00218"/>
    </source>
</evidence>
<feature type="chain" id="PRO_1000023942" description="Uroporphyrinogen decarboxylase">
    <location>
        <begin position="1"/>
        <end position="352"/>
    </location>
</feature>
<feature type="binding site" evidence="1">
    <location>
        <begin position="26"/>
        <end position="30"/>
    </location>
    <ligand>
        <name>substrate</name>
    </ligand>
</feature>
<feature type="binding site" evidence="1">
    <location>
        <position position="76"/>
    </location>
    <ligand>
        <name>substrate</name>
    </ligand>
</feature>
<feature type="binding site" evidence="1">
    <location>
        <position position="153"/>
    </location>
    <ligand>
        <name>substrate</name>
    </ligand>
</feature>
<feature type="binding site" evidence="1">
    <location>
        <position position="208"/>
    </location>
    <ligand>
        <name>substrate</name>
    </ligand>
</feature>
<feature type="binding site" evidence="1">
    <location>
        <position position="323"/>
    </location>
    <ligand>
        <name>substrate</name>
    </ligand>
</feature>
<feature type="site" description="Transition state stabilizer" evidence="1">
    <location>
        <position position="76"/>
    </location>
</feature>
<comment type="function">
    <text evidence="1">Catalyzes the decarboxylation of four acetate groups of uroporphyrinogen-III to yield coproporphyrinogen-III.</text>
</comment>
<comment type="catalytic activity">
    <reaction evidence="1">
        <text>uroporphyrinogen III + 4 H(+) = coproporphyrinogen III + 4 CO2</text>
        <dbReference type="Rhea" id="RHEA:19865"/>
        <dbReference type="ChEBI" id="CHEBI:15378"/>
        <dbReference type="ChEBI" id="CHEBI:16526"/>
        <dbReference type="ChEBI" id="CHEBI:57308"/>
        <dbReference type="ChEBI" id="CHEBI:57309"/>
        <dbReference type="EC" id="4.1.1.37"/>
    </reaction>
</comment>
<comment type="pathway">
    <text evidence="1">Porphyrin-containing compound metabolism; protoporphyrin-IX biosynthesis; coproporphyrinogen-III from 5-aminolevulinate: step 4/4.</text>
</comment>
<comment type="subunit">
    <text evidence="1">Homodimer.</text>
</comment>
<comment type="subcellular location">
    <subcellularLocation>
        <location evidence="1">Cytoplasm</location>
    </subcellularLocation>
</comment>
<comment type="similarity">
    <text evidence="1">Belongs to the uroporphyrinogen decarboxylase family.</text>
</comment>
<protein>
    <recommendedName>
        <fullName evidence="1">Uroporphyrinogen decarboxylase</fullName>
        <shortName evidence="1">UPD</shortName>
        <shortName evidence="1">URO-D</shortName>
        <ecNumber evidence="1">4.1.1.37</ecNumber>
    </recommendedName>
</protein>
<name>DCUP_PROMT</name>
<keyword id="KW-0963">Cytoplasm</keyword>
<keyword id="KW-0210">Decarboxylase</keyword>
<keyword id="KW-0456">Lyase</keyword>
<keyword id="KW-0627">Porphyrin biosynthesis</keyword>
<keyword id="KW-1185">Reference proteome</keyword>